<protein>
    <recommendedName>
        <fullName evidence="1">Bifunctional protein FolD</fullName>
    </recommendedName>
    <domain>
        <recommendedName>
            <fullName evidence="1">Methylenetetrahydrofolate dehydrogenase</fullName>
            <ecNumber evidence="1">1.5.1.5</ecNumber>
        </recommendedName>
    </domain>
    <domain>
        <recommendedName>
            <fullName evidence="1">Methenyltetrahydrofolate cyclohydrolase</fullName>
            <ecNumber evidence="1">3.5.4.9</ecNumber>
        </recommendedName>
    </domain>
</protein>
<comment type="function">
    <text evidence="1">Catalyzes the oxidation of 5,10-methylenetetrahydrofolate to 5,10-methenyltetrahydrofolate and then the hydrolysis of 5,10-methenyltetrahydrofolate to 10-formyltetrahydrofolate.</text>
</comment>
<comment type="catalytic activity">
    <reaction evidence="1">
        <text>(6R)-5,10-methylene-5,6,7,8-tetrahydrofolate + NADP(+) = (6R)-5,10-methenyltetrahydrofolate + NADPH</text>
        <dbReference type="Rhea" id="RHEA:22812"/>
        <dbReference type="ChEBI" id="CHEBI:15636"/>
        <dbReference type="ChEBI" id="CHEBI:57455"/>
        <dbReference type="ChEBI" id="CHEBI:57783"/>
        <dbReference type="ChEBI" id="CHEBI:58349"/>
        <dbReference type="EC" id="1.5.1.5"/>
    </reaction>
</comment>
<comment type="catalytic activity">
    <reaction evidence="1">
        <text>(6R)-5,10-methenyltetrahydrofolate + H2O = (6R)-10-formyltetrahydrofolate + H(+)</text>
        <dbReference type="Rhea" id="RHEA:23700"/>
        <dbReference type="ChEBI" id="CHEBI:15377"/>
        <dbReference type="ChEBI" id="CHEBI:15378"/>
        <dbReference type="ChEBI" id="CHEBI:57455"/>
        <dbReference type="ChEBI" id="CHEBI:195366"/>
        <dbReference type="EC" id="3.5.4.9"/>
    </reaction>
</comment>
<comment type="pathway">
    <text evidence="1">One-carbon metabolism; tetrahydrofolate interconversion.</text>
</comment>
<comment type="subunit">
    <text evidence="1">Homodimer.</text>
</comment>
<comment type="similarity">
    <text evidence="1">Belongs to the tetrahydrofolate dehydrogenase/cyclohydrolase family.</text>
</comment>
<keyword id="KW-0028">Amino-acid biosynthesis</keyword>
<keyword id="KW-0368">Histidine biosynthesis</keyword>
<keyword id="KW-0378">Hydrolase</keyword>
<keyword id="KW-0486">Methionine biosynthesis</keyword>
<keyword id="KW-0511">Multifunctional enzyme</keyword>
<keyword id="KW-0521">NADP</keyword>
<keyword id="KW-0554">One-carbon metabolism</keyword>
<keyword id="KW-0560">Oxidoreductase</keyword>
<keyword id="KW-0658">Purine biosynthesis</keyword>
<keyword id="KW-1185">Reference proteome</keyword>
<accession>A6X610</accession>
<dbReference type="EC" id="1.5.1.5" evidence="1"/>
<dbReference type="EC" id="3.5.4.9" evidence="1"/>
<dbReference type="EMBL" id="CP000759">
    <property type="protein sequence ID" value="ABS16664.1"/>
    <property type="molecule type" value="Genomic_DNA"/>
</dbReference>
<dbReference type="RefSeq" id="WP_012093300.1">
    <property type="nucleotide sequence ID" value="NC_009668.1"/>
</dbReference>
<dbReference type="SMR" id="A6X610"/>
<dbReference type="STRING" id="439375.Oant_3959"/>
<dbReference type="KEGG" id="oan:Oant_3959"/>
<dbReference type="PATRIC" id="fig|439375.7.peg.4132"/>
<dbReference type="eggNOG" id="COG0190">
    <property type="taxonomic scope" value="Bacteria"/>
</dbReference>
<dbReference type="HOGENOM" id="CLU_034045_1_2_5"/>
<dbReference type="PhylomeDB" id="A6X610"/>
<dbReference type="UniPathway" id="UPA00193"/>
<dbReference type="Proteomes" id="UP000002301">
    <property type="component" value="Chromosome 2"/>
</dbReference>
<dbReference type="GO" id="GO:0005829">
    <property type="term" value="C:cytosol"/>
    <property type="evidence" value="ECO:0007669"/>
    <property type="project" value="TreeGrafter"/>
</dbReference>
<dbReference type="GO" id="GO:0004477">
    <property type="term" value="F:methenyltetrahydrofolate cyclohydrolase activity"/>
    <property type="evidence" value="ECO:0007669"/>
    <property type="project" value="UniProtKB-UniRule"/>
</dbReference>
<dbReference type="GO" id="GO:0004488">
    <property type="term" value="F:methylenetetrahydrofolate dehydrogenase (NADP+) activity"/>
    <property type="evidence" value="ECO:0007669"/>
    <property type="project" value="UniProtKB-UniRule"/>
</dbReference>
<dbReference type="GO" id="GO:0000105">
    <property type="term" value="P:L-histidine biosynthetic process"/>
    <property type="evidence" value="ECO:0007669"/>
    <property type="project" value="UniProtKB-KW"/>
</dbReference>
<dbReference type="GO" id="GO:0009086">
    <property type="term" value="P:methionine biosynthetic process"/>
    <property type="evidence" value="ECO:0007669"/>
    <property type="project" value="UniProtKB-KW"/>
</dbReference>
<dbReference type="GO" id="GO:0006164">
    <property type="term" value="P:purine nucleotide biosynthetic process"/>
    <property type="evidence" value="ECO:0007669"/>
    <property type="project" value="UniProtKB-KW"/>
</dbReference>
<dbReference type="GO" id="GO:0035999">
    <property type="term" value="P:tetrahydrofolate interconversion"/>
    <property type="evidence" value="ECO:0007669"/>
    <property type="project" value="UniProtKB-UniRule"/>
</dbReference>
<dbReference type="CDD" id="cd01080">
    <property type="entry name" value="NAD_bind_m-THF_DH_Cyclohyd"/>
    <property type="match status" value="1"/>
</dbReference>
<dbReference type="FunFam" id="3.40.50.720:FF:000006">
    <property type="entry name" value="Bifunctional protein FolD"/>
    <property type="match status" value="1"/>
</dbReference>
<dbReference type="FunFam" id="3.40.50.10860:FF:000005">
    <property type="entry name" value="C-1-tetrahydrofolate synthase, cytoplasmic, putative"/>
    <property type="match status" value="1"/>
</dbReference>
<dbReference type="Gene3D" id="3.40.50.10860">
    <property type="entry name" value="Leucine Dehydrogenase, chain A, domain 1"/>
    <property type="match status" value="1"/>
</dbReference>
<dbReference type="Gene3D" id="3.40.50.720">
    <property type="entry name" value="NAD(P)-binding Rossmann-like Domain"/>
    <property type="match status" value="1"/>
</dbReference>
<dbReference type="HAMAP" id="MF_01576">
    <property type="entry name" value="THF_DHG_CYH"/>
    <property type="match status" value="1"/>
</dbReference>
<dbReference type="InterPro" id="IPR046346">
    <property type="entry name" value="Aminoacid_DH-like_N_sf"/>
</dbReference>
<dbReference type="InterPro" id="IPR036291">
    <property type="entry name" value="NAD(P)-bd_dom_sf"/>
</dbReference>
<dbReference type="InterPro" id="IPR000672">
    <property type="entry name" value="THF_DH/CycHdrlase"/>
</dbReference>
<dbReference type="InterPro" id="IPR020630">
    <property type="entry name" value="THF_DH/CycHdrlase_cat_dom"/>
</dbReference>
<dbReference type="InterPro" id="IPR020867">
    <property type="entry name" value="THF_DH/CycHdrlase_CS"/>
</dbReference>
<dbReference type="InterPro" id="IPR020631">
    <property type="entry name" value="THF_DH/CycHdrlase_NAD-bd_dom"/>
</dbReference>
<dbReference type="NCBIfam" id="NF008058">
    <property type="entry name" value="PRK10792.1"/>
    <property type="match status" value="1"/>
</dbReference>
<dbReference type="NCBIfam" id="NF010783">
    <property type="entry name" value="PRK14186.1"/>
    <property type="match status" value="1"/>
</dbReference>
<dbReference type="NCBIfam" id="NF010785">
    <property type="entry name" value="PRK14188.1"/>
    <property type="match status" value="1"/>
</dbReference>
<dbReference type="PANTHER" id="PTHR48099:SF5">
    <property type="entry name" value="C-1-TETRAHYDROFOLATE SYNTHASE, CYTOPLASMIC"/>
    <property type="match status" value="1"/>
</dbReference>
<dbReference type="PANTHER" id="PTHR48099">
    <property type="entry name" value="C-1-TETRAHYDROFOLATE SYNTHASE, CYTOPLASMIC-RELATED"/>
    <property type="match status" value="1"/>
</dbReference>
<dbReference type="Pfam" id="PF00763">
    <property type="entry name" value="THF_DHG_CYH"/>
    <property type="match status" value="1"/>
</dbReference>
<dbReference type="Pfam" id="PF02882">
    <property type="entry name" value="THF_DHG_CYH_C"/>
    <property type="match status" value="1"/>
</dbReference>
<dbReference type="PRINTS" id="PR00085">
    <property type="entry name" value="THFDHDRGNASE"/>
</dbReference>
<dbReference type="SUPFAM" id="SSF53223">
    <property type="entry name" value="Aminoacid dehydrogenase-like, N-terminal domain"/>
    <property type="match status" value="1"/>
</dbReference>
<dbReference type="SUPFAM" id="SSF51735">
    <property type="entry name" value="NAD(P)-binding Rossmann-fold domains"/>
    <property type="match status" value="1"/>
</dbReference>
<dbReference type="PROSITE" id="PS00766">
    <property type="entry name" value="THF_DHG_CYH_1"/>
    <property type="match status" value="1"/>
</dbReference>
<dbReference type="PROSITE" id="PS00767">
    <property type="entry name" value="THF_DHG_CYH_2"/>
    <property type="match status" value="1"/>
</dbReference>
<reference key="1">
    <citation type="journal article" date="2011" name="J. Bacteriol.">
        <title>Genome of Ochrobactrum anthropi ATCC 49188 T, a versatile opportunistic pathogen and symbiont of several eukaryotic hosts.</title>
        <authorList>
            <person name="Chain P.S."/>
            <person name="Lang D.M."/>
            <person name="Comerci D.J."/>
            <person name="Malfatti S.A."/>
            <person name="Vergez L.M."/>
            <person name="Shin M."/>
            <person name="Ugalde R.A."/>
            <person name="Garcia E."/>
            <person name="Tolmasky M.E."/>
        </authorList>
    </citation>
    <scope>NUCLEOTIDE SEQUENCE [LARGE SCALE GENOMIC DNA]</scope>
    <source>
        <strain>ATCC 49188 / DSM 6882 / CCUG 24695 / JCM 21032 / LMG 3331 / NBRC 15819 / NCTC 12168 / Alc 37</strain>
    </source>
</reference>
<proteinExistence type="inferred from homology"/>
<sequence length="299" mass="31360">MAQLIDGKKLAEDVVSTVKTETEKLVAATGIVPGIAVVIVGEDPASQVYVASKSKKAKECGFHSVQHDLPETASEQELLDLIESLNNDPAIHGILVQLPLPKHIDSGRVIQTISPDKDVDGFHFINVGKLGTGEVETAFVPCTPAGAMIMIERIHGRDLSGLNAVVIGRSNIVGKPMFNLLLAANATVTVAHSRTKDLPAIARTADILVAAVGRPQMVKGDWVKPGATVIDVGINRIPAPERGEGRTRLVGDVDFVEAEKVAGAITPVPGGVGPMTIAMLMANTLTAACRTAGVKKPVF</sequence>
<name>FOLD_BRUA4</name>
<gene>
    <name evidence="1" type="primary">folD</name>
    <name type="ordered locus">Oant_3959</name>
</gene>
<organism>
    <name type="scientific">Brucella anthropi (strain ATCC 49188 / DSM 6882 / CCUG 24695 / JCM 21032 / LMG 3331 / NBRC 15819 / NCTC 12168 / Alc 37)</name>
    <name type="common">Ochrobactrum anthropi</name>
    <dbReference type="NCBI Taxonomy" id="439375"/>
    <lineage>
        <taxon>Bacteria</taxon>
        <taxon>Pseudomonadati</taxon>
        <taxon>Pseudomonadota</taxon>
        <taxon>Alphaproteobacteria</taxon>
        <taxon>Hyphomicrobiales</taxon>
        <taxon>Brucellaceae</taxon>
        <taxon>Brucella/Ochrobactrum group</taxon>
        <taxon>Brucella</taxon>
    </lineage>
</organism>
<evidence type="ECO:0000255" key="1">
    <source>
        <dbReference type="HAMAP-Rule" id="MF_01576"/>
    </source>
</evidence>
<feature type="chain" id="PRO_1000069248" description="Bifunctional protein FolD">
    <location>
        <begin position="1"/>
        <end position="299"/>
    </location>
</feature>
<feature type="binding site" evidence="1">
    <location>
        <begin position="168"/>
        <end position="170"/>
    </location>
    <ligand>
        <name>NADP(+)</name>
        <dbReference type="ChEBI" id="CHEBI:58349"/>
    </ligand>
</feature>
<feature type="binding site" evidence="1">
    <location>
        <position position="193"/>
    </location>
    <ligand>
        <name>NADP(+)</name>
        <dbReference type="ChEBI" id="CHEBI:58349"/>
    </ligand>
</feature>
<feature type="binding site" evidence="1">
    <location>
        <position position="234"/>
    </location>
    <ligand>
        <name>NADP(+)</name>
        <dbReference type="ChEBI" id="CHEBI:58349"/>
    </ligand>
</feature>